<comment type="catalytic activity">
    <reaction>
        <text>hydrogencarbonate + NH4(+) + ATP = carbamoyl phosphate + ADP + H2O + H(+)</text>
        <dbReference type="Rhea" id="RHEA:10152"/>
        <dbReference type="ChEBI" id="CHEBI:15377"/>
        <dbReference type="ChEBI" id="CHEBI:15378"/>
        <dbReference type="ChEBI" id="CHEBI:17544"/>
        <dbReference type="ChEBI" id="CHEBI:28938"/>
        <dbReference type="ChEBI" id="CHEBI:30616"/>
        <dbReference type="ChEBI" id="CHEBI:58228"/>
        <dbReference type="ChEBI" id="CHEBI:456216"/>
        <dbReference type="EC" id="2.7.2.2"/>
    </reaction>
</comment>
<comment type="pathway">
    <text>Metabolic intermediate metabolism; carbamoyl phosphate degradation; CO(2) and NH(3) from carbamoyl phosphate: step 1/1.</text>
</comment>
<comment type="subcellular location">
    <subcellularLocation>
        <location evidence="1">Cytoplasm</location>
    </subcellularLocation>
</comment>
<comment type="similarity">
    <text evidence="1">Belongs to the carbamate kinase family.</text>
</comment>
<feature type="chain" id="PRO_0000185139" description="Carbamate kinase 2">
    <location>
        <begin position="1"/>
        <end position="309"/>
    </location>
</feature>
<evidence type="ECO:0000305" key="1"/>
<dbReference type="EC" id="2.7.2.2"/>
<dbReference type="EMBL" id="AE015929">
    <property type="protein sequence ID" value="AAO03699.1"/>
    <property type="molecule type" value="Genomic_DNA"/>
</dbReference>
<dbReference type="RefSeq" id="NP_763657.1">
    <property type="nucleotide sequence ID" value="NC_004461.1"/>
</dbReference>
<dbReference type="SMR" id="Q8CU42"/>
<dbReference type="KEGG" id="sep:SE_0102"/>
<dbReference type="PATRIC" id="fig|176280.10.peg.96"/>
<dbReference type="eggNOG" id="COG0549">
    <property type="taxonomic scope" value="Bacteria"/>
</dbReference>
<dbReference type="HOGENOM" id="CLU_076278_0_0_9"/>
<dbReference type="OrthoDB" id="9766717at2"/>
<dbReference type="UniPathway" id="UPA00996">
    <property type="reaction ID" value="UER00366"/>
</dbReference>
<dbReference type="Proteomes" id="UP000001411">
    <property type="component" value="Chromosome"/>
</dbReference>
<dbReference type="GO" id="GO:0005829">
    <property type="term" value="C:cytosol"/>
    <property type="evidence" value="ECO:0007669"/>
    <property type="project" value="TreeGrafter"/>
</dbReference>
<dbReference type="GO" id="GO:0005524">
    <property type="term" value="F:ATP binding"/>
    <property type="evidence" value="ECO:0007669"/>
    <property type="project" value="UniProtKB-KW"/>
</dbReference>
<dbReference type="GO" id="GO:0008804">
    <property type="term" value="F:carbamate kinase activity"/>
    <property type="evidence" value="ECO:0007669"/>
    <property type="project" value="UniProtKB-EC"/>
</dbReference>
<dbReference type="GO" id="GO:0019546">
    <property type="term" value="P:arginine deiminase pathway"/>
    <property type="evidence" value="ECO:0007669"/>
    <property type="project" value="TreeGrafter"/>
</dbReference>
<dbReference type="CDD" id="cd04235">
    <property type="entry name" value="AAK_CK"/>
    <property type="match status" value="1"/>
</dbReference>
<dbReference type="FunFam" id="3.40.1160.10:FF:000007">
    <property type="entry name" value="Carbamate kinase"/>
    <property type="match status" value="1"/>
</dbReference>
<dbReference type="Gene3D" id="3.40.1160.10">
    <property type="entry name" value="Acetylglutamate kinase-like"/>
    <property type="match status" value="1"/>
</dbReference>
<dbReference type="InterPro" id="IPR036393">
    <property type="entry name" value="AceGlu_kinase-like_sf"/>
</dbReference>
<dbReference type="InterPro" id="IPR001048">
    <property type="entry name" value="Asp/Glu/Uridylate_kinase"/>
</dbReference>
<dbReference type="InterPro" id="IPR003964">
    <property type="entry name" value="Carb_kinase"/>
</dbReference>
<dbReference type="NCBIfam" id="TIGR00746">
    <property type="entry name" value="arcC"/>
    <property type="match status" value="1"/>
</dbReference>
<dbReference type="NCBIfam" id="NF009007">
    <property type="entry name" value="PRK12352.1"/>
    <property type="match status" value="1"/>
</dbReference>
<dbReference type="PANTHER" id="PTHR30409">
    <property type="entry name" value="CARBAMATE KINASE"/>
    <property type="match status" value="1"/>
</dbReference>
<dbReference type="PANTHER" id="PTHR30409:SF1">
    <property type="entry name" value="CARBAMATE KINASE-RELATED"/>
    <property type="match status" value="1"/>
</dbReference>
<dbReference type="Pfam" id="PF00696">
    <property type="entry name" value="AA_kinase"/>
    <property type="match status" value="1"/>
</dbReference>
<dbReference type="PIRSF" id="PIRSF000723">
    <property type="entry name" value="Carbamate_kin"/>
    <property type="match status" value="1"/>
</dbReference>
<dbReference type="PRINTS" id="PR01469">
    <property type="entry name" value="CARBMTKINASE"/>
</dbReference>
<dbReference type="SUPFAM" id="SSF53633">
    <property type="entry name" value="Carbamate kinase-like"/>
    <property type="match status" value="1"/>
</dbReference>
<gene>
    <name type="primary">arcC2</name>
    <name type="ordered locus">SE_0102</name>
</gene>
<keyword id="KW-0056">Arginine metabolism</keyword>
<keyword id="KW-0067">ATP-binding</keyword>
<keyword id="KW-0963">Cytoplasm</keyword>
<keyword id="KW-0418">Kinase</keyword>
<keyword id="KW-0547">Nucleotide-binding</keyword>
<keyword id="KW-0808">Transferase</keyword>
<sequence>MSKIVVALGGNALGQSPKEQLDLLKSTSKSLVSLIDKGYEIVISHGNGPQVGSINLGLNYAAEHKQGPPFPFPECGAMSQAYIGYQMQESLQNELHSMGIDKEVVTLVTQVQVASDDSAFNNPTKPIGLFYTKEQADKFTKEKGYTFVEDSGRGYRRVVPSPQPISIVELDSIETLITHGTLVIAAGGGGIPVIKENEVYTGVDAVIDKDKTSALLAAHLQSDQLIILTAVDHVYINYGKENQRGLDEVSVDEMKKHISDGQFAKGSMLPKVEAALQFLEKNTKGSVLITSLAGLGDALDGKIGTLIKN</sequence>
<reference key="1">
    <citation type="journal article" date="2003" name="Mol. Microbiol.">
        <title>Genome-based analysis of virulence genes in a non-biofilm-forming Staphylococcus epidermidis strain (ATCC 12228).</title>
        <authorList>
            <person name="Zhang Y.-Q."/>
            <person name="Ren S.-X."/>
            <person name="Li H.-L."/>
            <person name="Wang Y.-X."/>
            <person name="Fu G."/>
            <person name="Yang J."/>
            <person name="Qin Z.-Q."/>
            <person name="Miao Y.-G."/>
            <person name="Wang W.-Y."/>
            <person name="Chen R.-S."/>
            <person name="Shen Y."/>
            <person name="Chen Z."/>
            <person name="Yuan Z.-H."/>
            <person name="Zhao G.-P."/>
            <person name="Qu D."/>
            <person name="Danchin A."/>
            <person name="Wen Y.-M."/>
        </authorList>
    </citation>
    <scope>NUCLEOTIDE SEQUENCE [LARGE SCALE GENOMIC DNA]</scope>
    <source>
        <strain>ATCC 12228 / FDA PCI 1200</strain>
    </source>
</reference>
<protein>
    <recommendedName>
        <fullName>Carbamate kinase 2</fullName>
        <ecNumber>2.7.2.2</ecNumber>
    </recommendedName>
</protein>
<organism>
    <name type="scientific">Staphylococcus epidermidis (strain ATCC 12228 / FDA PCI 1200)</name>
    <dbReference type="NCBI Taxonomy" id="176280"/>
    <lineage>
        <taxon>Bacteria</taxon>
        <taxon>Bacillati</taxon>
        <taxon>Bacillota</taxon>
        <taxon>Bacilli</taxon>
        <taxon>Bacillales</taxon>
        <taxon>Staphylococcaceae</taxon>
        <taxon>Staphylococcus</taxon>
    </lineage>
</organism>
<proteinExistence type="inferred from homology"/>
<accession>Q8CU42</accession>
<name>ARCC2_STAES</name>